<accession>Q8PCZ8</accession>
<protein>
    <recommendedName>
        <fullName evidence="1">ATP synthase subunit delta</fullName>
    </recommendedName>
    <alternativeName>
        <fullName evidence="1">ATP synthase F(1) sector subunit delta</fullName>
    </alternativeName>
    <alternativeName>
        <fullName evidence="1">F-type ATPase subunit delta</fullName>
        <shortName evidence="1">F-ATPase subunit delta</shortName>
    </alternativeName>
</protein>
<gene>
    <name evidence="1" type="primary">atpH</name>
    <name type="ordered locus">XCC0551</name>
</gene>
<reference key="1">
    <citation type="journal article" date="2002" name="Nature">
        <title>Comparison of the genomes of two Xanthomonas pathogens with differing host specificities.</title>
        <authorList>
            <person name="da Silva A.C.R."/>
            <person name="Ferro J.A."/>
            <person name="Reinach F.C."/>
            <person name="Farah C.S."/>
            <person name="Furlan L.R."/>
            <person name="Quaggio R.B."/>
            <person name="Monteiro-Vitorello C.B."/>
            <person name="Van Sluys M.A."/>
            <person name="Almeida N.F. Jr."/>
            <person name="Alves L.M.C."/>
            <person name="do Amaral A.M."/>
            <person name="Bertolini M.C."/>
            <person name="Camargo L.E.A."/>
            <person name="Camarotte G."/>
            <person name="Cannavan F."/>
            <person name="Cardozo J."/>
            <person name="Chambergo F."/>
            <person name="Ciapina L.P."/>
            <person name="Cicarelli R.M.B."/>
            <person name="Coutinho L.L."/>
            <person name="Cursino-Santos J.R."/>
            <person name="El-Dorry H."/>
            <person name="Faria J.B."/>
            <person name="Ferreira A.J.S."/>
            <person name="Ferreira R.C.C."/>
            <person name="Ferro M.I.T."/>
            <person name="Formighieri E.F."/>
            <person name="Franco M.C."/>
            <person name="Greggio C.C."/>
            <person name="Gruber A."/>
            <person name="Katsuyama A.M."/>
            <person name="Kishi L.T."/>
            <person name="Leite R.P."/>
            <person name="Lemos E.G.M."/>
            <person name="Lemos M.V.F."/>
            <person name="Locali E.C."/>
            <person name="Machado M.A."/>
            <person name="Madeira A.M.B.N."/>
            <person name="Martinez-Rossi N.M."/>
            <person name="Martins E.C."/>
            <person name="Meidanis J."/>
            <person name="Menck C.F.M."/>
            <person name="Miyaki C.Y."/>
            <person name="Moon D.H."/>
            <person name="Moreira L.M."/>
            <person name="Novo M.T.M."/>
            <person name="Okura V.K."/>
            <person name="Oliveira M.C."/>
            <person name="Oliveira V.R."/>
            <person name="Pereira H.A."/>
            <person name="Rossi A."/>
            <person name="Sena J.A.D."/>
            <person name="Silva C."/>
            <person name="de Souza R.F."/>
            <person name="Spinola L.A.F."/>
            <person name="Takita M.A."/>
            <person name="Tamura R.E."/>
            <person name="Teixeira E.C."/>
            <person name="Tezza R.I.D."/>
            <person name="Trindade dos Santos M."/>
            <person name="Truffi D."/>
            <person name="Tsai S.M."/>
            <person name="White F.F."/>
            <person name="Setubal J.C."/>
            <person name="Kitajima J.P."/>
        </authorList>
    </citation>
    <scope>NUCLEOTIDE SEQUENCE [LARGE SCALE GENOMIC DNA]</scope>
    <source>
        <strain>ATCC 33913 / DSM 3586 / NCPPB 528 / LMG 568 / P 25</strain>
    </source>
</reference>
<sequence length="175" mass="18359">MSQALTLARPYARAAFAIAREGGKFAPWSDALAFSAQVAGDPRVAALLLNPALHQDQAVTLLAPPAAEADYQRFLGLLADAQRLALLPEIAGLYEQLRAEAEHVVKATVTSATDMSPAELATITAALKKRFGREVDVTTAVDASLIGGAVIDTGEMVIDGSLKGKLARLQNSLAH</sequence>
<feature type="chain" id="PRO_0000371196" description="ATP synthase subunit delta">
    <location>
        <begin position="1"/>
        <end position="175"/>
    </location>
</feature>
<dbReference type="EMBL" id="AE008922">
    <property type="protein sequence ID" value="AAM39867.1"/>
    <property type="molecule type" value="Genomic_DNA"/>
</dbReference>
<dbReference type="RefSeq" id="NP_635943.1">
    <property type="nucleotide sequence ID" value="NC_003902.1"/>
</dbReference>
<dbReference type="RefSeq" id="WP_011035798.1">
    <property type="nucleotide sequence ID" value="NC_003902.1"/>
</dbReference>
<dbReference type="SMR" id="Q8PCZ8"/>
<dbReference type="STRING" id="190485.XCC0551"/>
<dbReference type="EnsemblBacteria" id="AAM39867">
    <property type="protein sequence ID" value="AAM39867"/>
    <property type="gene ID" value="XCC0551"/>
</dbReference>
<dbReference type="KEGG" id="xcc:XCC0551"/>
<dbReference type="PATRIC" id="fig|190485.4.peg.608"/>
<dbReference type="eggNOG" id="COG0712">
    <property type="taxonomic scope" value="Bacteria"/>
</dbReference>
<dbReference type="HOGENOM" id="CLU_085114_3_0_6"/>
<dbReference type="OrthoDB" id="9816221at2"/>
<dbReference type="Proteomes" id="UP000001010">
    <property type="component" value="Chromosome"/>
</dbReference>
<dbReference type="GO" id="GO:0005886">
    <property type="term" value="C:plasma membrane"/>
    <property type="evidence" value="ECO:0007669"/>
    <property type="project" value="UniProtKB-SubCell"/>
</dbReference>
<dbReference type="GO" id="GO:0045259">
    <property type="term" value="C:proton-transporting ATP synthase complex"/>
    <property type="evidence" value="ECO:0007669"/>
    <property type="project" value="UniProtKB-KW"/>
</dbReference>
<dbReference type="GO" id="GO:0046933">
    <property type="term" value="F:proton-transporting ATP synthase activity, rotational mechanism"/>
    <property type="evidence" value="ECO:0007669"/>
    <property type="project" value="UniProtKB-UniRule"/>
</dbReference>
<dbReference type="GO" id="GO:0015986">
    <property type="term" value="P:proton motive force-driven ATP synthesis"/>
    <property type="evidence" value="ECO:0000318"/>
    <property type="project" value="GO_Central"/>
</dbReference>
<dbReference type="Gene3D" id="1.10.520.20">
    <property type="entry name" value="N-terminal domain of the delta subunit of the F1F0-ATP synthase"/>
    <property type="match status" value="1"/>
</dbReference>
<dbReference type="HAMAP" id="MF_01416">
    <property type="entry name" value="ATP_synth_delta_bact"/>
    <property type="match status" value="1"/>
</dbReference>
<dbReference type="InterPro" id="IPR026015">
    <property type="entry name" value="ATP_synth_OSCP/delta_N_sf"/>
</dbReference>
<dbReference type="InterPro" id="IPR000711">
    <property type="entry name" value="ATPase_OSCP/dsu"/>
</dbReference>
<dbReference type="NCBIfam" id="TIGR01145">
    <property type="entry name" value="ATP_synt_delta"/>
    <property type="match status" value="1"/>
</dbReference>
<dbReference type="NCBIfam" id="NF004402">
    <property type="entry name" value="PRK05758.2-2"/>
    <property type="match status" value="1"/>
</dbReference>
<dbReference type="PANTHER" id="PTHR11910">
    <property type="entry name" value="ATP SYNTHASE DELTA CHAIN"/>
    <property type="match status" value="1"/>
</dbReference>
<dbReference type="Pfam" id="PF00213">
    <property type="entry name" value="OSCP"/>
    <property type="match status" value="1"/>
</dbReference>
<dbReference type="PRINTS" id="PR00125">
    <property type="entry name" value="ATPASEDELTA"/>
</dbReference>
<dbReference type="SUPFAM" id="SSF47928">
    <property type="entry name" value="N-terminal domain of the delta subunit of the F1F0-ATP synthase"/>
    <property type="match status" value="1"/>
</dbReference>
<proteinExistence type="inferred from homology"/>
<evidence type="ECO:0000255" key="1">
    <source>
        <dbReference type="HAMAP-Rule" id="MF_01416"/>
    </source>
</evidence>
<keyword id="KW-0066">ATP synthesis</keyword>
<keyword id="KW-0997">Cell inner membrane</keyword>
<keyword id="KW-1003">Cell membrane</keyword>
<keyword id="KW-0139">CF(1)</keyword>
<keyword id="KW-0375">Hydrogen ion transport</keyword>
<keyword id="KW-0406">Ion transport</keyword>
<keyword id="KW-0472">Membrane</keyword>
<keyword id="KW-1185">Reference proteome</keyword>
<keyword id="KW-0813">Transport</keyword>
<comment type="function">
    <text evidence="1">F(1)F(0) ATP synthase produces ATP from ADP in the presence of a proton or sodium gradient. F-type ATPases consist of two structural domains, F(1) containing the extramembraneous catalytic core and F(0) containing the membrane proton channel, linked together by a central stalk and a peripheral stalk. During catalysis, ATP synthesis in the catalytic domain of F(1) is coupled via a rotary mechanism of the central stalk subunits to proton translocation.</text>
</comment>
<comment type="function">
    <text evidence="1">This protein is part of the stalk that links CF(0) to CF(1). It either transmits conformational changes from CF(0) to CF(1) or is implicated in proton conduction.</text>
</comment>
<comment type="subunit">
    <text evidence="1">F-type ATPases have 2 components, F(1) - the catalytic core - and F(0) - the membrane proton channel. F(1) has five subunits: alpha(3), beta(3), gamma(1), delta(1), epsilon(1). F(0) has three main subunits: a(1), b(2) and c(10-14). The alpha and beta chains form an alternating ring which encloses part of the gamma chain. F(1) is attached to F(0) by a central stalk formed by the gamma and epsilon chains, while a peripheral stalk is formed by the delta and b chains.</text>
</comment>
<comment type="subcellular location">
    <subcellularLocation>
        <location evidence="1">Cell inner membrane</location>
        <topology evidence="1">Peripheral membrane protein</topology>
    </subcellularLocation>
</comment>
<comment type="similarity">
    <text evidence="1">Belongs to the ATPase delta chain family.</text>
</comment>
<organism>
    <name type="scientific">Xanthomonas campestris pv. campestris (strain ATCC 33913 / DSM 3586 / NCPPB 528 / LMG 568 / P 25)</name>
    <dbReference type="NCBI Taxonomy" id="190485"/>
    <lineage>
        <taxon>Bacteria</taxon>
        <taxon>Pseudomonadati</taxon>
        <taxon>Pseudomonadota</taxon>
        <taxon>Gammaproteobacteria</taxon>
        <taxon>Lysobacterales</taxon>
        <taxon>Lysobacteraceae</taxon>
        <taxon>Xanthomonas</taxon>
    </lineage>
</organism>
<name>ATPD_XANCP</name>